<dbReference type="EC" id="2.2.1.2" evidence="2"/>
<dbReference type="EMBL" id="CP000503">
    <property type="protein sequence ID" value="ABM25931.1"/>
    <property type="molecule type" value="Genomic_DNA"/>
</dbReference>
<dbReference type="RefSeq" id="WP_011790381.1">
    <property type="nucleotide sequence ID" value="NC_008750.1"/>
</dbReference>
<dbReference type="SMR" id="A1RMN6"/>
<dbReference type="GeneID" id="67442564"/>
<dbReference type="KEGG" id="shw:Sputw3181_3116"/>
<dbReference type="HOGENOM" id="CLU_047470_0_1_6"/>
<dbReference type="UniPathway" id="UPA00115">
    <property type="reaction ID" value="UER00414"/>
</dbReference>
<dbReference type="Proteomes" id="UP000002597">
    <property type="component" value="Chromosome"/>
</dbReference>
<dbReference type="GO" id="GO:0005829">
    <property type="term" value="C:cytosol"/>
    <property type="evidence" value="ECO:0007669"/>
    <property type="project" value="TreeGrafter"/>
</dbReference>
<dbReference type="GO" id="GO:0004801">
    <property type="term" value="F:transaldolase activity"/>
    <property type="evidence" value="ECO:0000250"/>
    <property type="project" value="UniProtKB"/>
</dbReference>
<dbReference type="GO" id="GO:0005975">
    <property type="term" value="P:carbohydrate metabolic process"/>
    <property type="evidence" value="ECO:0007669"/>
    <property type="project" value="InterPro"/>
</dbReference>
<dbReference type="GO" id="GO:0006098">
    <property type="term" value="P:pentose-phosphate shunt"/>
    <property type="evidence" value="ECO:0007669"/>
    <property type="project" value="UniProtKB-UniRule"/>
</dbReference>
<dbReference type="CDD" id="cd00957">
    <property type="entry name" value="Transaldolase_TalAB"/>
    <property type="match status" value="1"/>
</dbReference>
<dbReference type="FunFam" id="3.20.20.70:FF:000002">
    <property type="entry name" value="Transaldolase"/>
    <property type="match status" value="1"/>
</dbReference>
<dbReference type="Gene3D" id="3.20.20.70">
    <property type="entry name" value="Aldolase class I"/>
    <property type="match status" value="1"/>
</dbReference>
<dbReference type="HAMAP" id="MF_00492">
    <property type="entry name" value="Transaldolase_1"/>
    <property type="match status" value="1"/>
</dbReference>
<dbReference type="InterPro" id="IPR013785">
    <property type="entry name" value="Aldolase_TIM"/>
</dbReference>
<dbReference type="InterPro" id="IPR001585">
    <property type="entry name" value="TAL/FSA"/>
</dbReference>
<dbReference type="InterPro" id="IPR004730">
    <property type="entry name" value="Transaldolase_1"/>
</dbReference>
<dbReference type="InterPro" id="IPR018225">
    <property type="entry name" value="Transaldolase_AS"/>
</dbReference>
<dbReference type="NCBIfam" id="NF009001">
    <property type="entry name" value="PRK12346.1"/>
    <property type="match status" value="1"/>
</dbReference>
<dbReference type="NCBIfam" id="TIGR00874">
    <property type="entry name" value="talAB"/>
    <property type="match status" value="1"/>
</dbReference>
<dbReference type="PANTHER" id="PTHR10683">
    <property type="entry name" value="TRANSALDOLASE"/>
    <property type="match status" value="1"/>
</dbReference>
<dbReference type="PANTHER" id="PTHR10683:SF18">
    <property type="entry name" value="TRANSALDOLASE"/>
    <property type="match status" value="1"/>
</dbReference>
<dbReference type="Pfam" id="PF00923">
    <property type="entry name" value="TAL_FSA"/>
    <property type="match status" value="1"/>
</dbReference>
<dbReference type="SUPFAM" id="SSF51569">
    <property type="entry name" value="Aldolase"/>
    <property type="match status" value="1"/>
</dbReference>
<dbReference type="PROSITE" id="PS01054">
    <property type="entry name" value="TRANSALDOLASE_1"/>
    <property type="match status" value="1"/>
</dbReference>
<dbReference type="PROSITE" id="PS00958">
    <property type="entry name" value="TRANSALDOLASE_2"/>
    <property type="match status" value="1"/>
</dbReference>
<sequence length="318" mass="35099">MANTLEQLKSYTTIVADTGDIEAIKRYQPEDATTNPSLILKAAQIPEYSYLIDNAIAWAQTQSTELEQQIDDASDKLAVNIGVEILKLVPGRISTEVDARLSFDKEKSIAKAHKLVRLYQEAGIDKSRILIKLASTWEGICAAKELEQEGINCNLTLLFSFAQARACAEAGVYLISPFVGRILDWYKKDTGKDYAPANDPGVVSVTEIYNYYKQHGYNTVVMGASFRNIGEIIELAGCDRLTIGPSLLEELANSQAQIQAKLLPATTTVAAETPLTEAQFRWDFNQDPMAVEKLAEGIRNFAIDQGKLEVMLKAKLSN</sequence>
<accession>A1RMN6</accession>
<protein>
    <recommendedName>
        <fullName evidence="2">Transaldolase</fullName>
        <ecNumber evidence="2">2.2.1.2</ecNumber>
    </recommendedName>
</protein>
<comment type="function">
    <text evidence="2">Transaldolase is important for the balance of metabolites in the pentose-phosphate pathway.</text>
</comment>
<comment type="catalytic activity">
    <reaction evidence="2">
        <text>D-sedoheptulose 7-phosphate + D-glyceraldehyde 3-phosphate = D-erythrose 4-phosphate + beta-D-fructose 6-phosphate</text>
        <dbReference type="Rhea" id="RHEA:17053"/>
        <dbReference type="ChEBI" id="CHEBI:16897"/>
        <dbReference type="ChEBI" id="CHEBI:57483"/>
        <dbReference type="ChEBI" id="CHEBI:57634"/>
        <dbReference type="ChEBI" id="CHEBI:59776"/>
        <dbReference type="EC" id="2.2.1.2"/>
    </reaction>
</comment>
<comment type="pathway">
    <text evidence="2">Carbohydrate degradation; pentose phosphate pathway; D-glyceraldehyde 3-phosphate and beta-D-fructose 6-phosphate from D-ribose 5-phosphate and D-xylulose 5-phosphate (non-oxidative stage): step 2/3.</text>
</comment>
<comment type="subunit">
    <text evidence="1">Homodimer.</text>
</comment>
<comment type="subcellular location">
    <subcellularLocation>
        <location evidence="2">Cytoplasm</location>
    </subcellularLocation>
</comment>
<comment type="similarity">
    <text evidence="2">Belongs to the transaldolase family. Type 1 subfamily.</text>
</comment>
<evidence type="ECO:0000250" key="1"/>
<evidence type="ECO:0000255" key="2">
    <source>
        <dbReference type="HAMAP-Rule" id="MF_00492"/>
    </source>
</evidence>
<reference key="1">
    <citation type="submission" date="2006-12" db="EMBL/GenBank/DDBJ databases">
        <title>Complete sequence of Shewanella sp. W3-18-1.</title>
        <authorList>
            <consortium name="US DOE Joint Genome Institute"/>
            <person name="Copeland A."/>
            <person name="Lucas S."/>
            <person name="Lapidus A."/>
            <person name="Barry K."/>
            <person name="Detter J.C."/>
            <person name="Glavina del Rio T."/>
            <person name="Hammon N."/>
            <person name="Israni S."/>
            <person name="Dalin E."/>
            <person name="Tice H."/>
            <person name="Pitluck S."/>
            <person name="Chain P."/>
            <person name="Malfatti S."/>
            <person name="Shin M."/>
            <person name="Vergez L."/>
            <person name="Schmutz J."/>
            <person name="Larimer F."/>
            <person name="Land M."/>
            <person name="Hauser L."/>
            <person name="Kyrpides N."/>
            <person name="Lykidis A."/>
            <person name="Tiedje J."/>
            <person name="Richardson P."/>
        </authorList>
    </citation>
    <scope>NUCLEOTIDE SEQUENCE [LARGE SCALE GENOMIC DNA]</scope>
    <source>
        <strain>W3-18-1</strain>
    </source>
</reference>
<feature type="chain" id="PRO_1000014530" description="Transaldolase">
    <location>
        <begin position="1"/>
        <end position="318"/>
    </location>
</feature>
<feature type="active site" description="Schiff-base intermediate with substrate" evidence="2">
    <location>
        <position position="132"/>
    </location>
</feature>
<proteinExistence type="inferred from homology"/>
<keyword id="KW-0963">Cytoplasm</keyword>
<keyword id="KW-0570">Pentose shunt</keyword>
<keyword id="KW-0704">Schiff base</keyword>
<keyword id="KW-0808">Transferase</keyword>
<name>TAL_SHESW</name>
<organism>
    <name type="scientific">Shewanella sp. (strain W3-18-1)</name>
    <dbReference type="NCBI Taxonomy" id="351745"/>
    <lineage>
        <taxon>Bacteria</taxon>
        <taxon>Pseudomonadati</taxon>
        <taxon>Pseudomonadota</taxon>
        <taxon>Gammaproteobacteria</taxon>
        <taxon>Alteromonadales</taxon>
        <taxon>Shewanellaceae</taxon>
        <taxon>Shewanella</taxon>
    </lineage>
</organism>
<gene>
    <name evidence="2" type="primary">tal</name>
    <name type="ordered locus">Sputw3181_3116</name>
</gene>